<name>CCSA_SYNPW</name>
<protein>
    <recommendedName>
        <fullName evidence="2">Cytochrome c biogenesis protein CcsA</fullName>
    </recommendedName>
</protein>
<proteinExistence type="inferred from homology"/>
<comment type="function">
    <text evidence="2">Required during biogenesis of c-type cytochromes (cytochrome c6 and cytochrome f) at the step of heme attachment.</text>
</comment>
<comment type="subunit">
    <text evidence="1">May interact with ccs1.</text>
</comment>
<comment type="subcellular location">
    <subcellularLocation>
        <location evidence="2">Cellular thylakoid membrane</location>
        <topology evidence="2">Multi-pass membrane protein</topology>
    </subcellularLocation>
</comment>
<comment type="similarity">
    <text evidence="2">Belongs to the CcmF/CycK/Ccl1/NrfE/CcsA family.</text>
</comment>
<sequence>MGSFDLQSITSEPVLLLGLAAFALLLTALPWCFWAVSNGRSSSGVRSLLGLSNLLLTAQLVLRWWQSGHFPISNLYESLCFLAWACTLTQLLVERQWPSPLVAASATPMGLGCIAFASFALPDQLQQASPLVPALRSSWLVMHVSVIMVSYAALLVGSLLSVAVLMTDRGQQLELRSSSIGSGAFRKAVSITGETSAVGVQAAPELQLSSIDFSRSEQLDSLSYRTITVGFLLLTVGIISGAVWANEAWGSWWSWDPKETWALICWLVYAAYLHTRLSRGWQGRRPAMVASLGLVVIVVCYIGVNLLGIGLHSYGWFFDA</sequence>
<reference key="1">
    <citation type="submission" date="2006-05" db="EMBL/GenBank/DDBJ databases">
        <authorList>
            <consortium name="Genoscope"/>
        </authorList>
    </citation>
    <scope>NUCLEOTIDE SEQUENCE [LARGE SCALE GENOMIC DNA]</scope>
    <source>
        <strain>WH7803</strain>
    </source>
</reference>
<dbReference type="EMBL" id="CT971583">
    <property type="protein sequence ID" value="CAK23729.1"/>
    <property type="molecule type" value="Genomic_DNA"/>
</dbReference>
<dbReference type="SMR" id="A5GLB4"/>
<dbReference type="STRING" id="32051.SynWH7803_1303"/>
<dbReference type="KEGG" id="syx:SynWH7803_1303"/>
<dbReference type="eggNOG" id="COG0755">
    <property type="taxonomic scope" value="Bacteria"/>
</dbReference>
<dbReference type="HOGENOM" id="CLU_049710_2_4_3"/>
<dbReference type="OrthoDB" id="9814290at2"/>
<dbReference type="Proteomes" id="UP000001566">
    <property type="component" value="Chromosome"/>
</dbReference>
<dbReference type="GO" id="GO:0031676">
    <property type="term" value="C:plasma membrane-derived thylakoid membrane"/>
    <property type="evidence" value="ECO:0007669"/>
    <property type="project" value="UniProtKB-SubCell"/>
</dbReference>
<dbReference type="GO" id="GO:0020037">
    <property type="term" value="F:heme binding"/>
    <property type="evidence" value="ECO:0007669"/>
    <property type="project" value="InterPro"/>
</dbReference>
<dbReference type="GO" id="GO:0015232">
    <property type="term" value="F:heme transmembrane transporter activity"/>
    <property type="evidence" value="ECO:0007669"/>
    <property type="project" value="InterPro"/>
</dbReference>
<dbReference type="GO" id="GO:0017004">
    <property type="term" value="P:cytochrome complex assembly"/>
    <property type="evidence" value="ECO:0007669"/>
    <property type="project" value="UniProtKB-UniRule"/>
</dbReference>
<dbReference type="HAMAP" id="MF_01391">
    <property type="entry name" value="CytC_CcsA"/>
    <property type="match status" value="1"/>
</dbReference>
<dbReference type="InterPro" id="IPR002541">
    <property type="entry name" value="Cyt_c_assembly"/>
</dbReference>
<dbReference type="InterPro" id="IPR003557">
    <property type="entry name" value="Cyt_c_biogenesis_CcmC"/>
</dbReference>
<dbReference type="InterPro" id="IPR017562">
    <property type="entry name" value="Cyt_c_biogenesis_CcsA"/>
</dbReference>
<dbReference type="InterPro" id="IPR045062">
    <property type="entry name" value="Cyt_c_biogenesis_CcsA/CcmC"/>
</dbReference>
<dbReference type="NCBIfam" id="TIGR03144">
    <property type="entry name" value="cytochr_II_ccsB"/>
    <property type="match status" value="1"/>
</dbReference>
<dbReference type="PANTHER" id="PTHR30071:SF1">
    <property type="entry name" value="CYTOCHROME B_B6 PROTEIN-RELATED"/>
    <property type="match status" value="1"/>
</dbReference>
<dbReference type="PANTHER" id="PTHR30071">
    <property type="entry name" value="HEME EXPORTER PROTEIN C"/>
    <property type="match status" value="1"/>
</dbReference>
<dbReference type="Pfam" id="PF01578">
    <property type="entry name" value="Cytochrom_C_asm"/>
    <property type="match status" value="1"/>
</dbReference>
<dbReference type="PRINTS" id="PR01386">
    <property type="entry name" value="CCMCBIOGNSIS"/>
</dbReference>
<feature type="chain" id="PRO_0000353722" description="Cytochrome c biogenesis protein CcsA">
    <location>
        <begin position="1"/>
        <end position="320"/>
    </location>
</feature>
<feature type="transmembrane region" description="Helical" evidence="2">
    <location>
        <begin position="14"/>
        <end position="34"/>
    </location>
</feature>
<feature type="transmembrane region" description="Helical" evidence="2">
    <location>
        <begin position="68"/>
        <end position="88"/>
    </location>
</feature>
<feature type="transmembrane region" description="Helical" evidence="2">
    <location>
        <begin position="101"/>
        <end position="121"/>
    </location>
</feature>
<feature type="transmembrane region" description="Helical" evidence="2">
    <location>
        <begin position="146"/>
        <end position="166"/>
    </location>
</feature>
<feature type="transmembrane region" description="Helical" evidence="2">
    <location>
        <begin position="226"/>
        <end position="246"/>
    </location>
</feature>
<feature type="transmembrane region" description="Helical" evidence="2">
    <location>
        <begin position="260"/>
        <end position="277"/>
    </location>
</feature>
<feature type="transmembrane region" description="Helical" evidence="2">
    <location>
        <begin position="289"/>
        <end position="309"/>
    </location>
</feature>
<gene>
    <name evidence="2" type="primary">ccsA</name>
    <name type="ordered locus">SynWH7803_1303</name>
</gene>
<evidence type="ECO:0000250" key="1"/>
<evidence type="ECO:0000255" key="2">
    <source>
        <dbReference type="HAMAP-Rule" id="MF_01391"/>
    </source>
</evidence>
<keyword id="KW-0201">Cytochrome c-type biogenesis</keyword>
<keyword id="KW-0472">Membrane</keyword>
<keyword id="KW-1185">Reference proteome</keyword>
<keyword id="KW-0793">Thylakoid</keyword>
<keyword id="KW-0812">Transmembrane</keyword>
<keyword id="KW-1133">Transmembrane helix</keyword>
<organism>
    <name type="scientific">Synechococcus sp. (strain WH7803)</name>
    <dbReference type="NCBI Taxonomy" id="32051"/>
    <lineage>
        <taxon>Bacteria</taxon>
        <taxon>Bacillati</taxon>
        <taxon>Cyanobacteriota</taxon>
        <taxon>Cyanophyceae</taxon>
        <taxon>Synechococcales</taxon>
        <taxon>Synechococcaceae</taxon>
        <taxon>Synechococcus</taxon>
    </lineage>
</organism>
<accession>A5GLB4</accession>